<name>ONCO_MOUSE</name>
<protein>
    <recommendedName>
        <fullName>Oncomodulin</fullName>
        <shortName>OM</shortName>
    </recommendedName>
    <alternativeName>
        <fullName>Parvalbumin beta</fullName>
    </alternativeName>
</protein>
<proteinExistence type="evidence at transcript level"/>
<comment type="function">
    <text>Has some calmodulin-like activity with respect to enzyme activation and growth regulation. Binds two calcium ions.</text>
</comment>
<comment type="tissue specificity">
    <text>Found in tumor tissues and not detected in normal tissues.</text>
</comment>
<comment type="similarity">
    <text evidence="5">Belongs to the parvalbumin family.</text>
</comment>
<evidence type="ECO:0000250" key="1">
    <source>
        <dbReference type="UniProtKB" id="P02631"/>
    </source>
</evidence>
<evidence type="ECO:0000250" key="2">
    <source>
        <dbReference type="UniProtKB" id="P0CE72"/>
    </source>
</evidence>
<evidence type="ECO:0000255" key="3">
    <source>
        <dbReference type="PROSITE-ProRule" id="PRU00448"/>
    </source>
</evidence>
<evidence type="ECO:0000256" key="4">
    <source>
        <dbReference type="SAM" id="MobiDB-lite"/>
    </source>
</evidence>
<evidence type="ECO:0000305" key="5"/>
<feature type="initiator methionine" description="Removed" evidence="1">
    <location>
        <position position="1"/>
    </location>
</feature>
<feature type="chain" id="PRO_0000073583" description="Oncomodulin">
    <location>
        <begin position="2"/>
        <end position="109"/>
    </location>
</feature>
<feature type="domain" description="EF-hand 1" evidence="3">
    <location>
        <begin position="39"/>
        <end position="74"/>
    </location>
</feature>
<feature type="domain" description="EF-hand 2" evidence="3">
    <location>
        <begin position="78"/>
        <end position="109"/>
    </location>
</feature>
<feature type="region of interest" description="Disordered" evidence="4">
    <location>
        <begin position="82"/>
        <end position="109"/>
    </location>
</feature>
<feature type="compositionally biased region" description="Basic and acidic residues" evidence="4">
    <location>
        <begin position="94"/>
        <end position="109"/>
    </location>
</feature>
<feature type="binding site" evidence="2 3">
    <location>
        <position position="52"/>
    </location>
    <ligand>
        <name>Ca(2+)</name>
        <dbReference type="ChEBI" id="CHEBI:29108"/>
        <label>1</label>
    </ligand>
</feature>
<feature type="binding site" evidence="3">
    <location>
        <position position="54"/>
    </location>
    <ligand>
        <name>Ca(2+)</name>
        <dbReference type="ChEBI" id="CHEBI:29108"/>
        <label>1</label>
    </ligand>
</feature>
<feature type="binding site" evidence="2 3">
    <location>
        <position position="56"/>
    </location>
    <ligand>
        <name>Ca(2+)</name>
        <dbReference type="ChEBI" id="CHEBI:29108"/>
        <label>1</label>
    </ligand>
</feature>
<feature type="binding site" evidence="2 3">
    <location>
        <position position="58"/>
    </location>
    <ligand>
        <name>Ca(2+)</name>
        <dbReference type="ChEBI" id="CHEBI:29108"/>
        <label>1</label>
    </ligand>
</feature>
<feature type="binding site" evidence="2 3">
    <location>
        <position position="63"/>
    </location>
    <ligand>
        <name>Ca(2+)</name>
        <dbReference type="ChEBI" id="CHEBI:29108"/>
        <label>1</label>
    </ligand>
</feature>
<feature type="binding site" evidence="3">
    <location>
        <position position="91"/>
    </location>
    <ligand>
        <name>Ca(2+)</name>
        <dbReference type="ChEBI" id="CHEBI:29108"/>
        <label>2</label>
    </ligand>
</feature>
<feature type="binding site" evidence="2 3">
    <location>
        <position position="93"/>
    </location>
    <ligand>
        <name>Ca(2+)</name>
        <dbReference type="ChEBI" id="CHEBI:29108"/>
        <label>2</label>
    </ligand>
</feature>
<feature type="binding site" evidence="2 3">
    <location>
        <position position="95"/>
    </location>
    <ligand>
        <name>Ca(2+)</name>
        <dbReference type="ChEBI" id="CHEBI:29108"/>
        <label>2</label>
    </ligand>
</feature>
<feature type="binding site" evidence="2 3">
    <location>
        <position position="97"/>
    </location>
    <ligand>
        <name>Ca(2+)</name>
        <dbReference type="ChEBI" id="CHEBI:29108"/>
        <label>2</label>
    </ligand>
</feature>
<feature type="binding site" evidence="2 3">
    <location>
        <position position="102"/>
    </location>
    <ligand>
        <name>Ca(2+)</name>
        <dbReference type="ChEBI" id="CHEBI:29108"/>
        <label>2</label>
    </ligand>
</feature>
<feature type="modified residue" description="N-acetylserine" evidence="1">
    <location>
        <position position="2"/>
    </location>
</feature>
<sequence length="109" mass="12260">MSITDILSADDIAAALQECQDPDTFEPQKFFQTSGLSKMSASQLKDIFQFIDNDQSGYLDEDELKYFLQRFQSDARELTESETKSLMDAADNDGDGKIGADEFQEMVHS</sequence>
<gene>
    <name type="primary">Ocm</name>
</gene>
<organism>
    <name type="scientific">Mus musculus</name>
    <name type="common">Mouse</name>
    <dbReference type="NCBI Taxonomy" id="10090"/>
    <lineage>
        <taxon>Eukaryota</taxon>
        <taxon>Metazoa</taxon>
        <taxon>Chordata</taxon>
        <taxon>Craniata</taxon>
        <taxon>Vertebrata</taxon>
        <taxon>Euteleostomi</taxon>
        <taxon>Mammalia</taxon>
        <taxon>Eutheria</taxon>
        <taxon>Euarchontoglires</taxon>
        <taxon>Glires</taxon>
        <taxon>Rodentia</taxon>
        <taxon>Myomorpha</taxon>
        <taxon>Muroidea</taxon>
        <taxon>Muridae</taxon>
        <taxon>Murinae</taxon>
        <taxon>Mus</taxon>
        <taxon>Mus</taxon>
    </lineage>
</organism>
<reference key="1">
    <citation type="journal article" date="1992" name="Genetica">
        <title>The intracisternal A particle derived solo LTR promoter of the rat oncomodulin gene is not present in the mouse gene.</title>
        <authorList>
            <person name="Banville D."/>
            <person name="Rotaru M."/>
            <person name="Boie Y."/>
        </authorList>
    </citation>
    <scope>NUCLEOTIDE SEQUENCE [GENOMIC DNA]</scope>
</reference>
<reference key="2">
    <citation type="journal article" date="1995" name="Mamm. Genome">
        <title>Structure and chromosomal localization of the mouse oncomodulin gene.</title>
        <authorList>
            <person name="Staubli F."/>
            <person name="Klein A."/>
            <person name="Rentsch J."/>
            <person name="Hameister H."/>
            <person name="Berchtold M.W."/>
        </authorList>
    </citation>
    <scope>NUCLEOTIDE SEQUENCE [GENOMIC DNA]</scope>
    <source>
        <strain>C57BL/6J</strain>
        <tissue>Brain</tissue>
    </source>
</reference>
<keyword id="KW-0007">Acetylation</keyword>
<keyword id="KW-0106">Calcium</keyword>
<keyword id="KW-0479">Metal-binding</keyword>
<keyword id="KW-1185">Reference proteome</keyword>
<keyword id="KW-0677">Repeat</keyword>
<dbReference type="EMBL" id="S51661">
    <property type="protein sequence ID" value="AAB24617.1"/>
    <property type="molecule type" value="Genomic_DNA"/>
</dbReference>
<dbReference type="EMBL" id="S51656">
    <property type="protein sequence ID" value="AAB24617.1"/>
    <property type="status" value="JOINED"/>
    <property type="molecule type" value="Genomic_DNA"/>
</dbReference>
<dbReference type="EMBL" id="S51658">
    <property type="protein sequence ID" value="AAB24617.1"/>
    <property type="status" value="JOINED"/>
    <property type="molecule type" value="Genomic_DNA"/>
</dbReference>
<dbReference type="EMBL" id="S51659">
    <property type="protein sequence ID" value="AAB24617.1"/>
    <property type="status" value="JOINED"/>
    <property type="molecule type" value="Genomic_DNA"/>
</dbReference>
<dbReference type="EMBL" id="Z48237">
    <property type="protein sequence ID" value="CAA88274.1"/>
    <property type="molecule type" value="Genomic_DNA"/>
</dbReference>
<dbReference type="EMBL" id="Z48238">
    <property type="protein sequence ID" value="CAA88275.1"/>
    <property type="molecule type" value="Genomic_DNA"/>
</dbReference>
<dbReference type="CCDS" id="CCDS51693.1"/>
<dbReference type="RefSeq" id="NP_149028.2">
    <property type="nucleotide sequence ID" value="NM_033039.3"/>
</dbReference>
<dbReference type="SMR" id="P51879"/>
<dbReference type="FunCoup" id="P51879">
    <property type="interactions" value="2"/>
</dbReference>
<dbReference type="STRING" id="10090.ENSMUSP00000031622"/>
<dbReference type="PhosphoSitePlus" id="P51879"/>
<dbReference type="PaxDb" id="10090-ENSMUSP00000031622"/>
<dbReference type="PeptideAtlas" id="P51879"/>
<dbReference type="ProteomicsDB" id="294073"/>
<dbReference type="DNASU" id="18261"/>
<dbReference type="Ensembl" id="ENSMUST00000031622.13">
    <property type="protein sequence ID" value="ENSMUSP00000031622.7"/>
    <property type="gene ID" value="ENSMUSG00000029618.14"/>
</dbReference>
<dbReference type="Ensembl" id="ENSMUST00000085704.4">
    <property type="protein sequence ID" value="ENSMUSP00000082848.4"/>
    <property type="gene ID" value="ENSMUSG00000029618.14"/>
</dbReference>
<dbReference type="GeneID" id="18261"/>
<dbReference type="KEGG" id="mmu:18261"/>
<dbReference type="UCSC" id="uc029vqf.1">
    <property type="organism name" value="mouse"/>
</dbReference>
<dbReference type="AGR" id="MGI:97401"/>
<dbReference type="CTD" id="654231"/>
<dbReference type="MGI" id="MGI:97401">
    <property type="gene designation" value="Ocm"/>
</dbReference>
<dbReference type="VEuPathDB" id="HostDB:ENSMUSG00000029618"/>
<dbReference type="eggNOG" id="KOG0027">
    <property type="taxonomic scope" value="Eukaryota"/>
</dbReference>
<dbReference type="GeneTree" id="ENSGT00940000161875"/>
<dbReference type="HOGENOM" id="CLU_157356_0_0_1"/>
<dbReference type="InParanoid" id="P51879"/>
<dbReference type="OMA" id="CTCISIL"/>
<dbReference type="OrthoDB" id="26525at2759"/>
<dbReference type="PhylomeDB" id="P51879"/>
<dbReference type="TreeFam" id="TF332342"/>
<dbReference type="BioGRID-ORCS" id="18261">
    <property type="hits" value="4 hits in 76 CRISPR screens"/>
</dbReference>
<dbReference type="ChiTaRS" id="Ocm">
    <property type="organism name" value="mouse"/>
</dbReference>
<dbReference type="PRO" id="PR:P51879"/>
<dbReference type="Proteomes" id="UP000000589">
    <property type="component" value="Chromosome 5"/>
</dbReference>
<dbReference type="RNAct" id="P51879">
    <property type="molecule type" value="protein"/>
</dbReference>
<dbReference type="Bgee" id="ENSMUSG00000029618">
    <property type="expression patterns" value="Expressed in ileum and 35 other cell types or tissues"/>
</dbReference>
<dbReference type="ExpressionAtlas" id="P51879">
    <property type="expression patterns" value="baseline and differential"/>
</dbReference>
<dbReference type="GO" id="GO:0005509">
    <property type="term" value="F:calcium ion binding"/>
    <property type="evidence" value="ECO:0007669"/>
    <property type="project" value="InterPro"/>
</dbReference>
<dbReference type="CDD" id="cd16255">
    <property type="entry name" value="EFh_parvalbumin_beta"/>
    <property type="match status" value="1"/>
</dbReference>
<dbReference type="FunFam" id="1.10.238.10:FF:000060">
    <property type="entry name" value="Parvalbumin, thymic"/>
    <property type="match status" value="1"/>
</dbReference>
<dbReference type="Gene3D" id="1.10.238.10">
    <property type="entry name" value="EF-hand"/>
    <property type="match status" value="1"/>
</dbReference>
<dbReference type="InterPro" id="IPR011992">
    <property type="entry name" value="EF-hand-dom_pair"/>
</dbReference>
<dbReference type="InterPro" id="IPR018247">
    <property type="entry name" value="EF_Hand_1_Ca_BS"/>
</dbReference>
<dbReference type="InterPro" id="IPR002048">
    <property type="entry name" value="EF_hand_dom"/>
</dbReference>
<dbReference type="InterPro" id="IPR008080">
    <property type="entry name" value="Parvalbumin"/>
</dbReference>
<dbReference type="PANTHER" id="PTHR11653:SF4">
    <property type="entry name" value="ONCOMODULIN-2-RELATED"/>
    <property type="match status" value="1"/>
</dbReference>
<dbReference type="PANTHER" id="PTHR11653">
    <property type="entry name" value="PARVALBUMIN ALPHA"/>
    <property type="match status" value="1"/>
</dbReference>
<dbReference type="Pfam" id="PF13499">
    <property type="entry name" value="EF-hand_7"/>
    <property type="match status" value="1"/>
</dbReference>
<dbReference type="PRINTS" id="PR01697">
    <property type="entry name" value="PARVALBUMIN"/>
</dbReference>
<dbReference type="SMART" id="SM00054">
    <property type="entry name" value="EFh"/>
    <property type="match status" value="2"/>
</dbReference>
<dbReference type="SUPFAM" id="SSF47473">
    <property type="entry name" value="EF-hand"/>
    <property type="match status" value="1"/>
</dbReference>
<dbReference type="PROSITE" id="PS00018">
    <property type="entry name" value="EF_HAND_1"/>
    <property type="match status" value="2"/>
</dbReference>
<dbReference type="PROSITE" id="PS50222">
    <property type="entry name" value="EF_HAND_2"/>
    <property type="match status" value="2"/>
</dbReference>
<accession>P51879</accession>
<accession>Q62004</accession>